<proteinExistence type="inferred from homology"/>
<keyword id="KW-0472">Membrane</keyword>
<keyword id="KW-1185">Reference proteome</keyword>
<keyword id="KW-0812">Transmembrane</keyword>
<keyword id="KW-1133">Transmembrane helix</keyword>
<gene>
    <name type="ORF">DDB_G0277575</name>
</gene>
<protein>
    <recommendedName>
        <fullName>Transmembrane protein 234 homolog</fullName>
    </recommendedName>
</protein>
<evidence type="ECO:0000255" key="1"/>
<evidence type="ECO:0000269" key="2">
    <source>
    </source>
</evidence>
<evidence type="ECO:0000305" key="3"/>
<feature type="chain" id="PRO_0000326475" description="Transmembrane protein 234 homolog">
    <location>
        <begin position="1"/>
        <end position="128"/>
    </location>
</feature>
<feature type="transmembrane region" description="Helical" evidence="1">
    <location>
        <begin position="3"/>
        <end position="23"/>
    </location>
</feature>
<feature type="transmembrane region" description="Helical" evidence="1">
    <location>
        <begin position="53"/>
        <end position="73"/>
    </location>
</feature>
<feature type="transmembrane region" description="Helical" evidence="1">
    <location>
        <begin position="80"/>
        <end position="100"/>
    </location>
</feature>
<feature type="transmembrane region" description="Helical" evidence="1">
    <location>
        <begin position="104"/>
        <end position="124"/>
    </location>
</feature>
<name>TM234_DICDI</name>
<dbReference type="EMBL" id="AAFI02000020">
    <property type="protein sequence ID" value="EAL68659.1"/>
    <property type="molecule type" value="Genomic_DNA"/>
</dbReference>
<dbReference type="RefSeq" id="XP_642584.1">
    <property type="nucleotide sequence ID" value="XM_637492.1"/>
</dbReference>
<dbReference type="FunCoup" id="Q54ZG7">
    <property type="interactions" value="9"/>
</dbReference>
<dbReference type="TCDB" id="2.A.7.32.3">
    <property type="family name" value="the drug/metabolite transporter (dmt) superfamily"/>
</dbReference>
<dbReference type="PaxDb" id="44689-DDB0232155"/>
<dbReference type="EnsemblProtists" id="EAL68659">
    <property type="protein sequence ID" value="EAL68659"/>
    <property type="gene ID" value="DDB_G0277575"/>
</dbReference>
<dbReference type="GeneID" id="8621092"/>
<dbReference type="KEGG" id="ddi:DDB_G0277575"/>
<dbReference type="dictyBase" id="DDB_G0277575"/>
<dbReference type="VEuPathDB" id="AmoebaDB:DDB_G0277575"/>
<dbReference type="eggNOG" id="KOG4831">
    <property type="taxonomic scope" value="Eukaryota"/>
</dbReference>
<dbReference type="HOGENOM" id="CLU_108086_2_0_1"/>
<dbReference type="InParanoid" id="Q54ZG7"/>
<dbReference type="OMA" id="LGEWYAE"/>
<dbReference type="PhylomeDB" id="Q54ZG7"/>
<dbReference type="PRO" id="PR:Q54ZG7"/>
<dbReference type="Proteomes" id="UP000002195">
    <property type="component" value="Chromosome 2"/>
</dbReference>
<dbReference type="GO" id="GO:0016020">
    <property type="term" value="C:membrane"/>
    <property type="evidence" value="ECO:0007669"/>
    <property type="project" value="UniProtKB-SubCell"/>
</dbReference>
<dbReference type="Gene3D" id="1.10.3730.20">
    <property type="match status" value="1"/>
</dbReference>
<dbReference type="InterPro" id="IPR018908">
    <property type="entry name" value="TMEM234"/>
</dbReference>
<dbReference type="PANTHER" id="PTHR28668">
    <property type="entry name" value="TRANSMEMBRANE PROTEIN 234"/>
    <property type="match status" value="1"/>
</dbReference>
<dbReference type="PANTHER" id="PTHR28668:SF1">
    <property type="entry name" value="TRANSMEMBRANE PROTEIN 234"/>
    <property type="match status" value="1"/>
</dbReference>
<dbReference type="Pfam" id="PF10639">
    <property type="entry name" value="TMEM234"/>
    <property type="match status" value="1"/>
</dbReference>
<dbReference type="SUPFAM" id="SSF103481">
    <property type="entry name" value="Multidrug resistance efflux transporter EmrE"/>
    <property type="match status" value="1"/>
</dbReference>
<organism>
    <name type="scientific">Dictyostelium discoideum</name>
    <name type="common">Social amoeba</name>
    <dbReference type="NCBI Taxonomy" id="44689"/>
    <lineage>
        <taxon>Eukaryota</taxon>
        <taxon>Amoebozoa</taxon>
        <taxon>Evosea</taxon>
        <taxon>Eumycetozoa</taxon>
        <taxon>Dictyostelia</taxon>
        <taxon>Dictyosteliales</taxon>
        <taxon>Dictyosteliaceae</taxon>
        <taxon>Dictyostelium</taxon>
    </lineage>
</organism>
<reference key="1">
    <citation type="journal article" date="2002" name="Nature">
        <title>Sequence and analysis of chromosome 2 of Dictyostelium discoideum.</title>
        <authorList>
            <person name="Gloeckner G."/>
            <person name="Eichinger L."/>
            <person name="Szafranski K."/>
            <person name="Pachebat J.A."/>
            <person name="Bankier A.T."/>
            <person name="Dear P.H."/>
            <person name="Lehmann R."/>
            <person name="Baumgart C."/>
            <person name="Parra G."/>
            <person name="Abril J.F."/>
            <person name="Guigo R."/>
            <person name="Kumpf K."/>
            <person name="Tunggal B."/>
            <person name="Cox E.C."/>
            <person name="Quail M.A."/>
            <person name="Platzer M."/>
            <person name="Rosenthal A."/>
            <person name="Noegel A.A."/>
        </authorList>
    </citation>
    <scope>NUCLEOTIDE SEQUENCE [LARGE SCALE GENOMIC DNA]</scope>
    <source>
        <strain>AX4</strain>
    </source>
</reference>
<reference key="2">
    <citation type="journal article" date="2005" name="Nature">
        <title>The genome of the social amoeba Dictyostelium discoideum.</title>
        <authorList>
            <person name="Eichinger L."/>
            <person name="Pachebat J.A."/>
            <person name="Gloeckner G."/>
            <person name="Rajandream M.A."/>
            <person name="Sucgang R."/>
            <person name="Berriman M."/>
            <person name="Song J."/>
            <person name="Olsen R."/>
            <person name="Szafranski K."/>
            <person name="Xu Q."/>
            <person name="Tunggal B."/>
            <person name="Kummerfeld S."/>
            <person name="Madera M."/>
            <person name="Konfortov B.A."/>
            <person name="Rivero F."/>
            <person name="Bankier A.T."/>
            <person name="Lehmann R."/>
            <person name="Hamlin N."/>
            <person name="Davies R."/>
            <person name="Gaudet P."/>
            <person name="Fey P."/>
            <person name="Pilcher K."/>
            <person name="Chen G."/>
            <person name="Saunders D."/>
            <person name="Sodergren E.J."/>
            <person name="Davis P."/>
            <person name="Kerhornou A."/>
            <person name="Nie X."/>
            <person name="Hall N."/>
            <person name="Anjard C."/>
            <person name="Hemphill L."/>
            <person name="Bason N."/>
            <person name="Farbrother P."/>
            <person name="Desany B."/>
            <person name="Just E."/>
            <person name="Morio T."/>
            <person name="Rost R."/>
            <person name="Churcher C.M."/>
            <person name="Cooper J."/>
            <person name="Haydock S."/>
            <person name="van Driessche N."/>
            <person name="Cronin A."/>
            <person name="Goodhead I."/>
            <person name="Muzny D.M."/>
            <person name="Mourier T."/>
            <person name="Pain A."/>
            <person name="Lu M."/>
            <person name="Harper D."/>
            <person name="Lindsay R."/>
            <person name="Hauser H."/>
            <person name="James K.D."/>
            <person name="Quiles M."/>
            <person name="Madan Babu M."/>
            <person name="Saito T."/>
            <person name="Buchrieser C."/>
            <person name="Wardroper A."/>
            <person name="Felder M."/>
            <person name="Thangavelu M."/>
            <person name="Johnson D."/>
            <person name="Knights A."/>
            <person name="Loulseged H."/>
            <person name="Mungall K.L."/>
            <person name="Oliver K."/>
            <person name="Price C."/>
            <person name="Quail M.A."/>
            <person name="Urushihara H."/>
            <person name="Hernandez J."/>
            <person name="Rabbinowitsch E."/>
            <person name="Steffen D."/>
            <person name="Sanders M."/>
            <person name="Ma J."/>
            <person name="Kohara Y."/>
            <person name="Sharp S."/>
            <person name="Simmonds M.N."/>
            <person name="Spiegler S."/>
            <person name="Tivey A."/>
            <person name="Sugano S."/>
            <person name="White B."/>
            <person name="Walker D."/>
            <person name="Woodward J.R."/>
            <person name="Winckler T."/>
            <person name="Tanaka Y."/>
            <person name="Shaulsky G."/>
            <person name="Schleicher M."/>
            <person name="Weinstock G.M."/>
            <person name="Rosenthal A."/>
            <person name="Cox E.C."/>
            <person name="Chisholm R.L."/>
            <person name="Gibbs R.A."/>
            <person name="Loomis W.F."/>
            <person name="Platzer M."/>
            <person name="Kay R.R."/>
            <person name="Williams J.G."/>
            <person name="Dear P.H."/>
            <person name="Noegel A.A."/>
            <person name="Barrell B.G."/>
            <person name="Kuspa A."/>
        </authorList>
    </citation>
    <scope>NUCLEOTIDE SEQUENCE [LARGE SCALE GENOMIC DNA]</scope>
    <source>
        <strain>AX4</strain>
    </source>
</reference>
<reference key="3">
    <citation type="journal article" date="2006" name="J. Cell Sci.">
        <title>Functional genomics in Dictyostelium: midA, a new conserved protein, is required for mitochondrial function and development.</title>
        <authorList>
            <person name="Torija P."/>
            <person name="Vicente J.J."/>
            <person name="Rodrigues T.B."/>
            <person name="Robles A."/>
            <person name="Cerdan S."/>
            <person name="Sastre L."/>
            <person name="Calvo R.M."/>
            <person name="Escalante R."/>
        </authorList>
    </citation>
    <scope>DISRUPTION PHENOTYPE</scope>
</reference>
<comment type="subcellular location">
    <subcellularLocation>
        <location evidence="3">Membrane</location>
        <topology evidence="3">Multi-pass membrane protein</topology>
    </subcellularLocation>
</comment>
<comment type="disruption phenotype">
    <text evidence="2">No visible phenotype.</text>
</comment>
<comment type="similarity">
    <text evidence="3">Belongs to the TMEM234 family.</text>
</comment>
<sequence length="128" mass="14335">MDTYNIISLLLVGFIWGGTNPLIKRGSEGVSKVKKDNFLSQIIYEFVYLWTRPSYTIPMLINLSGSVVFFYTLSKVDISLVVPISNSLTFLFTSLMGMLLGEKVLHFKSYLGMIFVLAGVTICVSSKF</sequence>
<accession>Q54ZG7</accession>
<accession>Q8MMV2</accession>